<sequence>MQETFKFLRCNSQGEAVEDKYSLKTLKNHFVVRDEYNNLFRVFSSRDDFWEWEADQPFEQKCFHEVVFGFFPQRLKFDIDFPVNKSYSEEDNDDNVYNILDIIINVIMDVFYETYSLPYNINLTREQILLTDSIGLNKKRELKYSFHIILYTYSVLNNNEAKAFTSKVLENLPKHVYPFVDPQVNKSIQNFRIIGSHKKGSMRVKMFNEELADVFETSMTTKKSDTLITTPFETTCLPCILTHVKEMTNSCDSIQQNELEEVLKFAGVLCKNHCFLRVHKNLVLFKRTSPSYCEICKRMHDKDNTLILRVAGNKVYQHCRHDNKHSLLMGSLSGTTNFVEIYVDQVMTKSIEVHESILFEELPDTQKHIYDESSMREYERVPTLVVKAQMKIGKTIQLRNYLQKYYGNDSISKQQTIRFVTFRQIFSKNIQTRLPNFTLYSEVTGDLDSYERVIIQVESLFRLTSTAEPVDLLILDEVESIFNQFNSGLHKYFAPSFAIFMWMLETANHVICLDANLGNRTYNILQRFRGDVPIFFHWNQYQKAQNDMYYFTSSREIWLNNLLKDLLEDKKIVIPTNSLMEARLLQTFIQKKFPEKKIGFYSSKSTAHERESHFNNVSYYWGLIDILIYTPTISAGVSYEDKRFDVLYGFFNNMSCDVETCCQMLGRVRELKSKTYKICLQGKQNYFPETIEDIETFTLQKRDTLFQTINNHQLSFTYSKETGRPIYYKTPYYHLWLETMRIQHLSKNHFITRFINQVADTGAKVFILTGEKLETVKQYTSIKMEIKHQDYVNIASAETIDANKALLIKQNLKEGITVDQQDLFAYEKYKLLEFYAWHGNKITPKFVEQYNSFMTKQNYTGRVQISRGKTVHESLTMLQTQELNFHQWAMQHAEHHDLQFNYSFQSHMYAIMLLTKCGFKCVQDPNILTNEQLMTKLVDEFVQYDLSAVSFEFKLKKPNKMDPQTILKFINKVLGIRYGLKIHHNKGNYYIKNTKAGSLIPFVRQQIKQSPCVVSNLLPITETFSTKEESSPTREETSSIKEKTFTET</sequence>
<feature type="chain" id="PRO_0000373467" description="Putative helicase/primase complex protein">
    <location>
        <begin position="1"/>
        <end position="1048"/>
    </location>
</feature>
<feature type="region of interest" description="Disordered" evidence="1">
    <location>
        <begin position="1025"/>
        <end position="1048"/>
    </location>
</feature>
<dbReference type="EMBL" id="AY261360">
    <property type="status" value="NOT_ANNOTATED_CDS"/>
    <property type="molecule type" value="Genomic_DNA"/>
</dbReference>
<dbReference type="Proteomes" id="UP000000861">
    <property type="component" value="Segment"/>
</dbReference>
<dbReference type="GO" id="GO:0005524">
    <property type="term" value="F:ATP binding"/>
    <property type="evidence" value="ECO:0007669"/>
    <property type="project" value="InterPro"/>
</dbReference>
<dbReference type="GO" id="GO:0003688">
    <property type="term" value="F:DNA replication origin binding"/>
    <property type="evidence" value="ECO:0007669"/>
    <property type="project" value="InterPro"/>
</dbReference>
<dbReference type="GO" id="GO:0006260">
    <property type="term" value="P:DNA replication"/>
    <property type="evidence" value="ECO:0007669"/>
    <property type="project" value="UniProtKB-KW"/>
</dbReference>
<dbReference type="Gene3D" id="3.40.50.300">
    <property type="entry name" value="P-loop containing nucleotide triphosphate hydrolases"/>
    <property type="match status" value="1"/>
</dbReference>
<dbReference type="InterPro" id="IPR027417">
    <property type="entry name" value="P-loop_NTPase"/>
</dbReference>
<dbReference type="InterPro" id="IPR003450">
    <property type="entry name" value="Replication_origin-bd"/>
</dbReference>
<dbReference type="Pfam" id="PF02399">
    <property type="entry name" value="Herpes_ori_bp"/>
    <property type="match status" value="2"/>
</dbReference>
<dbReference type="Pfam" id="PF03121">
    <property type="entry name" value="Herpes_UL52"/>
    <property type="match status" value="1"/>
</dbReference>
<dbReference type="SUPFAM" id="SSF52540">
    <property type="entry name" value="P-loop containing nucleoside triphosphate hydrolases"/>
    <property type="match status" value="1"/>
</dbReference>
<keyword id="KW-0235">DNA replication</keyword>
<keyword id="KW-0244">Early protein</keyword>
<organism>
    <name type="scientific">African swine fever virus (isolate Pig/Kenya/KEN-50/1950)</name>
    <name type="common">ASFV</name>
    <dbReference type="NCBI Taxonomy" id="561445"/>
    <lineage>
        <taxon>Viruses</taxon>
        <taxon>Varidnaviria</taxon>
        <taxon>Bamfordvirae</taxon>
        <taxon>Nucleocytoviricota</taxon>
        <taxon>Pokkesviricetes</taxon>
        <taxon>Asfuvirales</taxon>
        <taxon>Asfarviridae</taxon>
        <taxon>Asfivirus</taxon>
        <taxon>African swine fever virus</taxon>
    </lineage>
</organism>
<reference key="1">
    <citation type="submission" date="2003-03" db="EMBL/GenBank/DDBJ databases">
        <title>African swine fever virus genomes.</title>
        <authorList>
            <person name="Kutish G.F."/>
            <person name="Rock D.L."/>
        </authorList>
    </citation>
    <scope>NUCLEOTIDE SEQUENCE [LARGE SCALE GENOMIC DNA]</scope>
</reference>
<evidence type="ECO:0000256" key="1">
    <source>
        <dbReference type="SAM" id="MobiDB-lite"/>
    </source>
</evidence>
<evidence type="ECO:0000305" key="2"/>
<name>PRIM_ASFK5</name>
<protein>
    <recommendedName>
        <fullName>Putative helicase/primase complex protein</fullName>
        <shortName>pF1055L</shortName>
    </recommendedName>
</protein>
<comment type="function">
    <text>May be involved in DNA replication.</text>
</comment>
<comment type="induction">
    <text evidence="2">Expressed in the early phase of the viral replicative cycle.</text>
</comment>
<comment type="similarity">
    <text evidence="2">Belongs to the asfivirus F1055L family.</text>
</comment>
<organismHost>
    <name type="scientific">Ornithodoros</name>
    <name type="common">relapsing fever ticks</name>
    <dbReference type="NCBI Taxonomy" id="6937"/>
</organismHost>
<organismHost>
    <name type="scientific">Phacochoerus aethiopicus</name>
    <name type="common">Warthog</name>
    <dbReference type="NCBI Taxonomy" id="85517"/>
</organismHost>
<organismHost>
    <name type="scientific">Phacochoerus africanus</name>
    <name type="common">Warthog</name>
    <dbReference type="NCBI Taxonomy" id="41426"/>
</organismHost>
<organismHost>
    <name type="scientific">Potamochoerus larvatus</name>
    <name type="common">Bushpig</name>
    <dbReference type="NCBI Taxonomy" id="273792"/>
</organismHost>
<organismHost>
    <name type="scientific">Sus scrofa</name>
    <name type="common">Pig</name>
    <dbReference type="NCBI Taxonomy" id="9823"/>
</organismHost>
<accession>P0CA10</accession>
<proteinExistence type="inferred from homology"/>
<gene>
    <name type="ordered locus">Ken-059</name>
</gene>